<name>ILVC_OCEIH</name>
<proteinExistence type="inferred from homology"/>
<sequence>MAKVLYEKDIQDGVLKNKKIAVIGYGSQGHAHAMNLRDSGYDVVVGLRPGKSQEKAEEDGFNVLSVAEASSQADVVMVLLPDEMQPKVYEESIKDNLEQGNALVFAHGFNIHFTQVVPPANVDVFLVAPKGPGHLVRRTFEEGAGVPALYGVHQDYTGEAKDVALAYSKGIGAARAGVLETSFQEETETDLFGEQAVLCGGVTSLIKAGFETLTDAGYQPEVAYFECLHEMKLIVDLLYEGGLENMRYSISDTAQWGDFVSGQRVVDDQTKERMKSILDDIQTGSFAKGWILENQAGRPQFNAINRRENRHPIETVGRELRELMPFVKQPINAKKKDVNVHVPN</sequence>
<evidence type="ECO:0000255" key="1">
    <source>
        <dbReference type="HAMAP-Rule" id="MF_00435"/>
    </source>
</evidence>
<evidence type="ECO:0000255" key="2">
    <source>
        <dbReference type="PROSITE-ProRule" id="PRU01197"/>
    </source>
</evidence>
<evidence type="ECO:0000255" key="3">
    <source>
        <dbReference type="PROSITE-ProRule" id="PRU01198"/>
    </source>
</evidence>
<protein>
    <recommendedName>
        <fullName evidence="1">Ketol-acid reductoisomerase (NADP(+))</fullName>
        <shortName evidence="1">KARI</shortName>
        <ecNumber evidence="1">1.1.1.86</ecNumber>
    </recommendedName>
    <alternativeName>
        <fullName evidence="1">Acetohydroxy-acid isomeroreductase</fullName>
        <shortName evidence="1">AHIR</shortName>
    </alternativeName>
    <alternativeName>
        <fullName evidence="1">Alpha-keto-beta-hydroxylacyl reductoisomerase</fullName>
    </alternativeName>
    <alternativeName>
        <fullName evidence="1">Ketol-acid reductoisomerase type 1</fullName>
    </alternativeName>
    <alternativeName>
        <fullName evidence="1">Ketol-acid reductoisomerase type I</fullName>
    </alternativeName>
</protein>
<organism>
    <name type="scientific">Oceanobacillus iheyensis (strain DSM 14371 / CIP 107618 / JCM 11309 / KCTC 3954 / HTE831)</name>
    <dbReference type="NCBI Taxonomy" id="221109"/>
    <lineage>
        <taxon>Bacteria</taxon>
        <taxon>Bacillati</taxon>
        <taxon>Bacillota</taxon>
        <taxon>Bacilli</taxon>
        <taxon>Bacillales</taxon>
        <taxon>Bacillaceae</taxon>
        <taxon>Oceanobacillus</taxon>
    </lineage>
</organism>
<feature type="chain" id="PRO_0000151334" description="Ketol-acid reductoisomerase (NADP(+))">
    <location>
        <begin position="1"/>
        <end position="344"/>
    </location>
</feature>
<feature type="domain" description="KARI N-terminal Rossmann" evidence="2">
    <location>
        <begin position="2"/>
        <end position="181"/>
    </location>
</feature>
<feature type="domain" description="KARI C-terminal knotted" evidence="3">
    <location>
        <begin position="182"/>
        <end position="327"/>
    </location>
</feature>
<feature type="active site" evidence="1">
    <location>
        <position position="107"/>
    </location>
</feature>
<feature type="binding site" evidence="1">
    <location>
        <begin position="25"/>
        <end position="28"/>
    </location>
    <ligand>
        <name>NADP(+)</name>
        <dbReference type="ChEBI" id="CHEBI:58349"/>
    </ligand>
</feature>
<feature type="binding site" evidence="1">
    <location>
        <position position="48"/>
    </location>
    <ligand>
        <name>NADP(+)</name>
        <dbReference type="ChEBI" id="CHEBI:58349"/>
    </ligand>
</feature>
<feature type="binding site" evidence="1">
    <location>
        <position position="52"/>
    </location>
    <ligand>
        <name>NADP(+)</name>
        <dbReference type="ChEBI" id="CHEBI:58349"/>
    </ligand>
</feature>
<feature type="binding site" evidence="1">
    <location>
        <begin position="82"/>
        <end position="85"/>
    </location>
    <ligand>
        <name>NADP(+)</name>
        <dbReference type="ChEBI" id="CHEBI:58349"/>
    </ligand>
</feature>
<feature type="binding site" evidence="1">
    <location>
        <position position="133"/>
    </location>
    <ligand>
        <name>NADP(+)</name>
        <dbReference type="ChEBI" id="CHEBI:58349"/>
    </ligand>
</feature>
<feature type="binding site" evidence="1">
    <location>
        <position position="190"/>
    </location>
    <ligand>
        <name>Mg(2+)</name>
        <dbReference type="ChEBI" id="CHEBI:18420"/>
        <label>1</label>
    </ligand>
</feature>
<feature type="binding site" evidence="1">
    <location>
        <position position="190"/>
    </location>
    <ligand>
        <name>Mg(2+)</name>
        <dbReference type="ChEBI" id="CHEBI:18420"/>
        <label>2</label>
    </ligand>
</feature>
<feature type="binding site" evidence="1">
    <location>
        <position position="194"/>
    </location>
    <ligand>
        <name>Mg(2+)</name>
        <dbReference type="ChEBI" id="CHEBI:18420"/>
        <label>1</label>
    </ligand>
</feature>
<feature type="binding site" evidence="1">
    <location>
        <position position="226"/>
    </location>
    <ligand>
        <name>Mg(2+)</name>
        <dbReference type="ChEBI" id="CHEBI:18420"/>
        <label>2</label>
    </ligand>
</feature>
<feature type="binding site" evidence="1">
    <location>
        <position position="230"/>
    </location>
    <ligand>
        <name>Mg(2+)</name>
        <dbReference type="ChEBI" id="CHEBI:18420"/>
        <label>2</label>
    </ligand>
</feature>
<feature type="binding site" evidence="1">
    <location>
        <position position="251"/>
    </location>
    <ligand>
        <name>substrate</name>
    </ligand>
</feature>
<comment type="function">
    <text evidence="1">Involved in the biosynthesis of branched-chain amino acids (BCAA). Catalyzes an alkyl-migration followed by a ketol-acid reduction of (S)-2-acetolactate (S2AL) to yield (R)-2,3-dihydroxy-isovalerate. In the isomerase reaction, S2AL is rearranged via a Mg-dependent methyl migration to produce 3-hydroxy-3-methyl-2-ketobutyrate (HMKB). In the reductase reaction, this 2-ketoacid undergoes a metal-dependent reduction by NADPH to yield (R)-2,3-dihydroxy-isovalerate.</text>
</comment>
<comment type="catalytic activity">
    <reaction evidence="1">
        <text>(2R)-2,3-dihydroxy-3-methylbutanoate + NADP(+) = (2S)-2-acetolactate + NADPH + H(+)</text>
        <dbReference type="Rhea" id="RHEA:22068"/>
        <dbReference type="ChEBI" id="CHEBI:15378"/>
        <dbReference type="ChEBI" id="CHEBI:49072"/>
        <dbReference type="ChEBI" id="CHEBI:57783"/>
        <dbReference type="ChEBI" id="CHEBI:58349"/>
        <dbReference type="ChEBI" id="CHEBI:58476"/>
        <dbReference type="EC" id="1.1.1.86"/>
    </reaction>
</comment>
<comment type="catalytic activity">
    <reaction evidence="1">
        <text>(2R,3R)-2,3-dihydroxy-3-methylpentanoate + NADP(+) = (S)-2-ethyl-2-hydroxy-3-oxobutanoate + NADPH + H(+)</text>
        <dbReference type="Rhea" id="RHEA:13493"/>
        <dbReference type="ChEBI" id="CHEBI:15378"/>
        <dbReference type="ChEBI" id="CHEBI:49256"/>
        <dbReference type="ChEBI" id="CHEBI:49258"/>
        <dbReference type="ChEBI" id="CHEBI:57783"/>
        <dbReference type="ChEBI" id="CHEBI:58349"/>
        <dbReference type="EC" id="1.1.1.86"/>
    </reaction>
</comment>
<comment type="cofactor">
    <cofactor evidence="1">
        <name>Mg(2+)</name>
        <dbReference type="ChEBI" id="CHEBI:18420"/>
    </cofactor>
    <text evidence="1">Binds 2 magnesium ions per subunit.</text>
</comment>
<comment type="pathway">
    <text evidence="1">Amino-acid biosynthesis; L-isoleucine biosynthesis; L-isoleucine from 2-oxobutanoate: step 2/4.</text>
</comment>
<comment type="pathway">
    <text evidence="1">Amino-acid biosynthesis; L-valine biosynthesis; L-valine from pyruvate: step 2/4.</text>
</comment>
<comment type="similarity">
    <text evidence="1">Belongs to the ketol-acid reductoisomerase family.</text>
</comment>
<accession>Q8EN66</accession>
<keyword id="KW-0028">Amino-acid biosynthesis</keyword>
<keyword id="KW-0100">Branched-chain amino acid biosynthesis</keyword>
<keyword id="KW-0460">Magnesium</keyword>
<keyword id="KW-0479">Metal-binding</keyword>
<keyword id="KW-0521">NADP</keyword>
<keyword id="KW-0560">Oxidoreductase</keyword>
<keyword id="KW-1185">Reference proteome</keyword>
<reference key="1">
    <citation type="journal article" date="2002" name="Nucleic Acids Res.">
        <title>Genome sequence of Oceanobacillus iheyensis isolated from the Iheya Ridge and its unexpected adaptive capabilities to extreme environments.</title>
        <authorList>
            <person name="Takami H."/>
            <person name="Takaki Y."/>
            <person name="Uchiyama I."/>
        </authorList>
    </citation>
    <scope>NUCLEOTIDE SEQUENCE [LARGE SCALE GENOMIC DNA]</scope>
    <source>
        <strain>DSM 14371 / CIP 107618 / JCM 11309 / KCTC 3954 / HTE831</strain>
    </source>
</reference>
<gene>
    <name evidence="1" type="primary">ilvC</name>
    <name type="ordered locus">OB2621</name>
</gene>
<dbReference type="EC" id="1.1.1.86" evidence="1"/>
<dbReference type="EMBL" id="BA000028">
    <property type="protein sequence ID" value="BAC14577.1"/>
    <property type="molecule type" value="Genomic_DNA"/>
</dbReference>
<dbReference type="RefSeq" id="WP_011067014.1">
    <property type="nucleotide sequence ID" value="NC_004193.1"/>
</dbReference>
<dbReference type="SMR" id="Q8EN66"/>
<dbReference type="STRING" id="221109.gene:10734873"/>
<dbReference type="KEGG" id="oih:OB2621"/>
<dbReference type="eggNOG" id="COG0059">
    <property type="taxonomic scope" value="Bacteria"/>
</dbReference>
<dbReference type="HOGENOM" id="CLU_033821_0_1_9"/>
<dbReference type="OrthoDB" id="9804088at2"/>
<dbReference type="PhylomeDB" id="Q8EN66"/>
<dbReference type="UniPathway" id="UPA00047">
    <property type="reaction ID" value="UER00056"/>
</dbReference>
<dbReference type="UniPathway" id="UPA00049">
    <property type="reaction ID" value="UER00060"/>
</dbReference>
<dbReference type="Proteomes" id="UP000000822">
    <property type="component" value="Chromosome"/>
</dbReference>
<dbReference type="GO" id="GO:0005829">
    <property type="term" value="C:cytosol"/>
    <property type="evidence" value="ECO:0007669"/>
    <property type="project" value="TreeGrafter"/>
</dbReference>
<dbReference type="GO" id="GO:0004455">
    <property type="term" value="F:ketol-acid reductoisomerase activity"/>
    <property type="evidence" value="ECO:0007669"/>
    <property type="project" value="UniProtKB-UniRule"/>
</dbReference>
<dbReference type="GO" id="GO:0000287">
    <property type="term" value="F:magnesium ion binding"/>
    <property type="evidence" value="ECO:0007669"/>
    <property type="project" value="UniProtKB-UniRule"/>
</dbReference>
<dbReference type="GO" id="GO:0050661">
    <property type="term" value="F:NADP binding"/>
    <property type="evidence" value="ECO:0007669"/>
    <property type="project" value="InterPro"/>
</dbReference>
<dbReference type="GO" id="GO:0009097">
    <property type="term" value="P:isoleucine biosynthetic process"/>
    <property type="evidence" value="ECO:0007669"/>
    <property type="project" value="UniProtKB-UniRule"/>
</dbReference>
<dbReference type="GO" id="GO:0009099">
    <property type="term" value="P:L-valine biosynthetic process"/>
    <property type="evidence" value="ECO:0007669"/>
    <property type="project" value="UniProtKB-UniRule"/>
</dbReference>
<dbReference type="FunFam" id="3.40.50.720:FF:000023">
    <property type="entry name" value="Ketol-acid reductoisomerase (NADP(+))"/>
    <property type="match status" value="1"/>
</dbReference>
<dbReference type="Gene3D" id="6.10.240.10">
    <property type="match status" value="1"/>
</dbReference>
<dbReference type="Gene3D" id="3.40.50.720">
    <property type="entry name" value="NAD(P)-binding Rossmann-like Domain"/>
    <property type="match status" value="1"/>
</dbReference>
<dbReference type="HAMAP" id="MF_00435">
    <property type="entry name" value="IlvC"/>
    <property type="match status" value="1"/>
</dbReference>
<dbReference type="InterPro" id="IPR008927">
    <property type="entry name" value="6-PGluconate_DH-like_C_sf"/>
</dbReference>
<dbReference type="InterPro" id="IPR013023">
    <property type="entry name" value="KARI"/>
</dbReference>
<dbReference type="InterPro" id="IPR000506">
    <property type="entry name" value="KARI_C"/>
</dbReference>
<dbReference type="InterPro" id="IPR013116">
    <property type="entry name" value="KARI_N"/>
</dbReference>
<dbReference type="InterPro" id="IPR014359">
    <property type="entry name" value="KARI_prok"/>
</dbReference>
<dbReference type="InterPro" id="IPR036291">
    <property type="entry name" value="NAD(P)-bd_dom_sf"/>
</dbReference>
<dbReference type="NCBIfam" id="TIGR00465">
    <property type="entry name" value="ilvC"/>
    <property type="match status" value="1"/>
</dbReference>
<dbReference type="NCBIfam" id="NF004017">
    <property type="entry name" value="PRK05479.1"/>
    <property type="match status" value="1"/>
</dbReference>
<dbReference type="NCBIfam" id="NF009940">
    <property type="entry name" value="PRK13403.1"/>
    <property type="match status" value="1"/>
</dbReference>
<dbReference type="PANTHER" id="PTHR21371">
    <property type="entry name" value="KETOL-ACID REDUCTOISOMERASE, MITOCHONDRIAL"/>
    <property type="match status" value="1"/>
</dbReference>
<dbReference type="PANTHER" id="PTHR21371:SF1">
    <property type="entry name" value="KETOL-ACID REDUCTOISOMERASE, MITOCHONDRIAL"/>
    <property type="match status" value="1"/>
</dbReference>
<dbReference type="Pfam" id="PF01450">
    <property type="entry name" value="KARI_C"/>
    <property type="match status" value="1"/>
</dbReference>
<dbReference type="Pfam" id="PF07991">
    <property type="entry name" value="KARI_N"/>
    <property type="match status" value="1"/>
</dbReference>
<dbReference type="PIRSF" id="PIRSF000116">
    <property type="entry name" value="IlvC_gammaproteo"/>
    <property type="match status" value="1"/>
</dbReference>
<dbReference type="SUPFAM" id="SSF48179">
    <property type="entry name" value="6-phosphogluconate dehydrogenase C-terminal domain-like"/>
    <property type="match status" value="1"/>
</dbReference>
<dbReference type="SUPFAM" id="SSF51735">
    <property type="entry name" value="NAD(P)-binding Rossmann-fold domains"/>
    <property type="match status" value="1"/>
</dbReference>
<dbReference type="PROSITE" id="PS51851">
    <property type="entry name" value="KARI_C"/>
    <property type="match status" value="1"/>
</dbReference>
<dbReference type="PROSITE" id="PS51850">
    <property type="entry name" value="KARI_N"/>
    <property type="match status" value="1"/>
</dbReference>